<dbReference type="EMBL" id="L27050">
    <property type="protein sequence ID" value="AAA65642.1"/>
    <property type="molecule type" value="mRNA"/>
</dbReference>
<dbReference type="EMBL" id="AC025574">
    <property type="status" value="NOT_ANNOTATED_CDS"/>
    <property type="molecule type" value="Genomic_DNA"/>
</dbReference>
<dbReference type="EMBL" id="BC026257">
    <property type="protein sequence ID" value="AAH26257.1"/>
    <property type="molecule type" value="mRNA"/>
</dbReference>
<dbReference type="CCDS" id="CCDS44923.1"/>
<dbReference type="PIR" id="JC2549">
    <property type="entry name" value="JC2549"/>
</dbReference>
<dbReference type="RefSeq" id="NP_001629.1">
    <property type="nucleotide sequence ID" value="NM_001638.4"/>
</dbReference>
<dbReference type="BioGRID" id="106816">
    <property type="interactions" value="4"/>
</dbReference>
<dbReference type="FunCoup" id="Q13790">
    <property type="interactions" value="122"/>
</dbReference>
<dbReference type="IntAct" id="Q13790">
    <property type="interactions" value="2"/>
</dbReference>
<dbReference type="STRING" id="9606.ENSP00000381250"/>
<dbReference type="GlyConnect" id="702">
    <property type="glycosylation" value="16 N-Linked glycans (3 sites), 1 O-Linked glycan (1 site)"/>
</dbReference>
<dbReference type="GlyCosmos" id="Q13790">
    <property type="glycosylation" value="8 sites, 22 glycans"/>
</dbReference>
<dbReference type="GlyGen" id="Q13790">
    <property type="glycosylation" value="9 sites, 26 N-linked glycans (3 sites), 7 O-linked glycans (6 sites)"/>
</dbReference>
<dbReference type="iPTMnet" id="Q13790"/>
<dbReference type="PhosphoSitePlus" id="Q13790"/>
<dbReference type="BioMuta" id="APOF"/>
<dbReference type="DMDM" id="327478500"/>
<dbReference type="MassIVE" id="Q13790"/>
<dbReference type="PaxDb" id="9606-ENSP00000381250"/>
<dbReference type="PeptideAtlas" id="Q13790"/>
<dbReference type="ProteomicsDB" id="59683"/>
<dbReference type="Antibodypedia" id="28188">
    <property type="antibodies" value="297 antibodies from 33 providers"/>
</dbReference>
<dbReference type="DNASU" id="319"/>
<dbReference type="Ensembl" id="ENST00000398189.4">
    <property type="protein sequence ID" value="ENSP00000381250.3"/>
    <property type="gene ID" value="ENSG00000175336.10"/>
</dbReference>
<dbReference type="GeneID" id="319"/>
<dbReference type="KEGG" id="hsa:319"/>
<dbReference type="MANE-Select" id="ENST00000398189.4">
    <property type="protein sequence ID" value="ENSP00000381250.3"/>
    <property type="RefSeq nucleotide sequence ID" value="NM_001638.4"/>
    <property type="RefSeq protein sequence ID" value="NP_001629.1"/>
</dbReference>
<dbReference type="UCSC" id="uc001sle.2">
    <property type="organism name" value="human"/>
</dbReference>
<dbReference type="AGR" id="HGNC:615"/>
<dbReference type="CTD" id="319"/>
<dbReference type="DisGeNET" id="319"/>
<dbReference type="GeneCards" id="APOF"/>
<dbReference type="HGNC" id="HGNC:615">
    <property type="gene designation" value="APOF"/>
</dbReference>
<dbReference type="HPA" id="ENSG00000175336">
    <property type="expression patterns" value="Tissue enriched (liver)"/>
</dbReference>
<dbReference type="MIM" id="107760">
    <property type="type" value="gene"/>
</dbReference>
<dbReference type="neXtProt" id="NX_Q13790"/>
<dbReference type="OpenTargets" id="ENSG00000175336"/>
<dbReference type="PharmGKB" id="PA24902"/>
<dbReference type="VEuPathDB" id="HostDB:ENSG00000175336"/>
<dbReference type="eggNOG" id="ENOG502QUQ0">
    <property type="taxonomic scope" value="Eukaryota"/>
</dbReference>
<dbReference type="GeneTree" id="ENSGT00500000045104"/>
<dbReference type="HOGENOM" id="CLU_078958_0_0_1"/>
<dbReference type="InParanoid" id="Q13790"/>
<dbReference type="OMA" id="FTHMAPL"/>
<dbReference type="OrthoDB" id="9895613at2759"/>
<dbReference type="PAN-GO" id="Q13790">
    <property type="GO annotations" value="2 GO annotations based on evolutionary models"/>
</dbReference>
<dbReference type="PhylomeDB" id="Q13790"/>
<dbReference type="TreeFam" id="TF338778"/>
<dbReference type="PathwayCommons" id="Q13790"/>
<dbReference type="Reactome" id="R-HSA-8964041">
    <property type="pathway name" value="LDL remodeling"/>
</dbReference>
<dbReference type="SignaLink" id="Q13790"/>
<dbReference type="BioGRID-ORCS" id="319">
    <property type="hits" value="20 hits in 1149 CRISPR screens"/>
</dbReference>
<dbReference type="GeneWiki" id="APOF"/>
<dbReference type="GenomeRNAi" id="319"/>
<dbReference type="Pharos" id="Q13790">
    <property type="development level" value="Tbio"/>
</dbReference>
<dbReference type="PRO" id="PR:Q13790"/>
<dbReference type="Proteomes" id="UP000005640">
    <property type="component" value="Chromosome 12"/>
</dbReference>
<dbReference type="RNAct" id="Q13790">
    <property type="molecule type" value="protein"/>
</dbReference>
<dbReference type="Bgee" id="ENSG00000175336">
    <property type="expression patterns" value="Expressed in right lobe of liver and 43 other cell types or tissues"/>
</dbReference>
<dbReference type="GO" id="GO:0005615">
    <property type="term" value="C:extracellular space"/>
    <property type="evidence" value="ECO:0000314"/>
    <property type="project" value="UniProtKB"/>
</dbReference>
<dbReference type="GO" id="GO:0034364">
    <property type="term" value="C:high-density lipoprotein particle"/>
    <property type="evidence" value="ECO:0007669"/>
    <property type="project" value="UniProtKB-KW"/>
</dbReference>
<dbReference type="GO" id="GO:0034362">
    <property type="term" value="C:low-density lipoprotein particle"/>
    <property type="evidence" value="ECO:0007669"/>
    <property type="project" value="UniProtKB-KW"/>
</dbReference>
<dbReference type="GO" id="GO:0015485">
    <property type="term" value="F:cholesterol binding"/>
    <property type="evidence" value="ECO:0000304"/>
    <property type="project" value="ProtInc"/>
</dbReference>
<dbReference type="GO" id="GO:0005319">
    <property type="term" value="F:lipid transporter activity"/>
    <property type="evidence" value="ECO:0000304"/>
    <property type="project" value="ProtInc"/>
</dbReference>
<dbReference type="GO" id="GO:0005102">
    <property type="term" value="F:signaling receptor binding"/>
    <property type="evidence" value="ECO:0000304"/>
    <property type="project" value="ProtInc"/>
</dbReference>
<dbReference type="GO" id="GO:0033344">
    <property type="term" value="P:cholesterol efflux"/>
    <property type="evidence" value="ECO:0007669"/>
    <property type="project" value="Ensembl"/>
</dbReference>
<dbReference type="GO" id="GO:0008203">
    <property type="term" value="P:cholesterol metabolic process"/>
    <property type="evidence" value="ECO:0000318"/>
    <property type="project" value="GO_Central"/>
</dbReference>
<dbReference type="GO" id="GO:0006629">
    <property type="term" value="P:lipid metabolic process"/>
    <property type="evidence" value="ECO:0000304"/>
    <property type="project" value="ProtInc"/>
</dbReference>
<dbReference type="GO" id="GO:0006869">
    <property type="term" value="P:lipid transport"/>
    <property type="evidence" value="ECO:0000304"/>
    <property type="project" value="ProtInc"/>
</dbReference>
<dbReference type="GO" id="GO:0006641">
    <property type="term" value="P:triglyceride metabolic process"/>
    <property type="evidence" value="ECO:0007669"/>
    <property type="project" value="Ensembl"/>
</dbReference>
<dbReference type="InterPro" id="IPR026114">
    <property type="entry name" value="APOF"/>
</dbReference>
<dbReference type="PANTHER" id="PTHR15011">
    <property type="entry name" value="APOLIPOPROTEIN F"/>
    <property type="match status" value="1"/>
</dbReference>
<dbReference type="PANTHER" id="PTHR15011:SF3">
    <property type="entry name" value="APOLIPOPROTEIN F"/>
    <property type="match status" value="1"/>
</dbReference>
<dbReference type="Pfam" id="PF15148">
    <property type="entry name" value="Apolipo_F"/>
    <property type="match status" value="1"/>
</dbReference>
<proteinExistence type="evidence at protein level"/>
<reference key="1">
    <citation type="journal article" date="1994" name="Biochem. Biophys. Res. Commun.">
        <title>Purification and molecular cloning of human apolipoprotein F.</title>
        <authorList>
            <person name="Day J.R."/>
            <person name="Albers J.J."/>
            <person name="Gilbert T.L."/>
            <person name="Whitmore T.E."/>
            <person name="McConathy W.J."/>
            <person name="Wolfbauer G."/>
        </authorList>
    </citation>
    <scope>NUCLEOTIDE SEQUENCE [MRNA]</scope>
    <scope>PROTEIN SEQUENCE OF 165-194 AND 251-265</scope>
    <scope>SUBCELLULAR LOCATION</scope>
    <scope>TISSUE SPECIFICITY</scope>
    <source>
        <tissue>Hepatoma</tissue>
    </source>
</reference>
<reference key="2">
    <citation type="journal article" date="1999" name="J. Biol. Chem.">
        <title>Molecular cloning and expression of lipid transfer inhibitor protein reveals its identity with apolipoprotein F.</title>
        <authorList>
            <person name="Wang X."/>
            <person name="Driscoll D.M."/>
            <person name="Morton R.E."/>
        </authorList>
    </citation>
    <scope>NUCLEOTIDE SEQUENCE [MRNA]</scope>
    <scope>PROTEIN SEQUENCE OF 165-178</scope>
    <scope>FUNCTION</scope>
    <source>
        <tissue>Liver</tissue>
        <tissue>Plasma</tissue>
    </source>
</reference>
<reference key="3">
    <citation type="journal article" date="2006" name="Nature">
        <title>The finished DNA sequence of human chromosome 12.</title>
        <authorList>
            <person name="Scherer S.E."/>
            <person name="Muzny D.M."/>
            <person name="Buhay C.J."/>
            <person name="Chen R."/>
            <person name="Cree A."/>
            <person name="Ding Y."/>
            <person name="Dugan-Rocha S."/>
            <person name="Gill R."/>
            <person name="Gunaratne P."/>
            <person name="Harris R.A."/>
            <person name="Hawes A.C."/>
            <person name="Hernandez J."/>
            <person name="Hodgson A.V."/>
            <person name="Hume J."/>
            <person name="Jackson A."/>
            <person name="Khan Z.M."/>
            <person name="Kovar-Smith C."/>
            <person name="Lewis L.R."/>
            <person name="Lozado R.J."/>
            <person name="Metzker M.L."/>
            <person name="Milosavljevic A."/>
            <person name="Miner G.R."/>
            <person name="Montgomery K.T."/>
            <person name="Morgan M.B."/>
            <person name="Nazareth L.V."/>
            <person name="Scott G."/>
            <person name="Sodergren E."/>
            <person name="Song X.-Z."/>
            <person name="Steffen D."/>
            <person name="Lovering R.C."/>
            <person name="Wheeler D.A."/>
            <person name="Worley K.C."/>
            <person name="Yuan Y."/>
            <person name="Zhang Z."/>
            <person name="Adams C.Q."/>
            <person name="Ansari-Lari M.A."/>
            <person name="Ayele M."/>
            <person name="Brown M.J."/>
            <person name="Chen G."/>
            <person name="Chen Z."/>
            <person name="Clerc-Blankenburg K.P."/>
            <person name="Davis C."/>
            <person name="Delgado O."/>
            <person name="Dinh H.H."/>
            <person name="Draper H."/>
            <person name="Gonzalez-Garay M.L."/>
            <person name="Havlak P."/>
            <person name="Jackson L.R."/>
            <person name="Jacob L.S."/>
            <person name="Kelly S.H."/>
            <person name="Li L."/>
            <person name="Li Z."/>
            <person name="Liu J."/>
            <person name="Liu W."/>
            <person name="Lu J."/>
            <person name="Maheshwari M."/>
            <person name="Nguyen B.-V."/>
            <person name="Okwuonu G.O."/>
            <person name="Pasternak S."/>
            <person name="Perez L.M."/>
            <person name="Plopper F.J.H."/>
            <person name="Santibanez J."/>
            <person name="Shen H."/>
            <person name="Tabor P.E."/>
            <person name="Verduzco D."/>
            <person name="Waldron L."/>
            <person name="Wang Q."/>
            <person name="Williams G.A."/>
            <person name="Zhang J."/>
            <person name="Zhou J."/>
            <person name="Allen C.C."/>
            <person name="Amin A.G."/>
            <person name="Anyalebechi V."/>
            <person name="Bailey M."/>
            <person name="Barbaria J.A."/>
            <person name="Bimage K.E."/>
            <person name="Bryant N.P."/>
            <person name="Burch P.E."/>
            <person name="Burkett C.E."/>
            <person name="Burrell K.L."/>
            <person name="Calderon E."/>
            <person name="Cardenas V."/>
            <person name="Carter K."/>
            <person name="Casias K."/>
            <person name="Cavazos I."/>
            <person name="Cavazos S.R."/>
            <person name="Ceasar H."/>
            <person name="Chacko J."/>
            <person name="Chan S.N."/>
            <person name="Chavez D."/>
            <person name="Christopoulos C."/>
            <person name="Chu J."/>
            <person name="Cockrell R."/>
            <person name="Cox C.D."/>
            <person name="Dang M."/>
            <person name="Dathorne S.R."/>
            <person name="David R."/>
            <person name="Davis C.M."/>
            <person name="Davy-Carroll L."/>
            <person name="Deshazo D.R."/>
            <person name="Donlin J.E."/>
            <person name="D'Souza L."/>
            <person name="Eaves K.A."/>
            <person name="Egan A."/>
            <person name="Emery-Cohen A.J."/>
            <person name="Escotto M."/>
            <person name="Flagg N."/>
            <person name="Forbes L.D."/>
            <person name="Gabisi A.M."/>
            <person name="Garza M."/>
            <person name="Hamilton C."/>
            <person name="Henderson N."/>
            <person name="Hernandez O."/>
            <person name="Hines S."/>
            <person name="Hogues M.E."/>
            <person name="Huang M."/>
            <person name="Idlebird D.G."/>
            <person name="Johnson R."/>
            <person name="Jolivet A."/>
            <person name="Jones S."/>
            <person name="Kagan R."/>
            <person name="King L.M."/>
            <person name="Leal B."/>
            <person name="Lebow H."/>
            <person name="Lee S."/>
            <person name="LeVan J.M."/>
            <person name="Lewis L.C."/>
            <person name="London P."/>
            <person name="Lorensuhewa L.M."/>
            <person name="Loulseged H."/>
            <person name="Lovett D.A."/>
            <person name="Lucier A."/>
            <person name="Lucier R.L."/>
            <person name="Ma J."/>
            <person name="Madu R.C."/>
            <person name="Mapua P."/>
            <person name="Martindale A.D."/>
            <person name="Martinez E."/>
            <person name="Massey E."/>
            <person name="Mawhiney S."/>
            <person name="Meador M.G."/>
            <person name="Mendez S."/>
            <person name="Mercado C."/>
            <person name="Mercado I.C."/>
            <person name="Merritt C.E."/>
            <person name="Miner Z.L."/>
            <person name="Minja E."/>
            <person name="Mitchell T."/>
            <person name="Mohabbat F."/>
            <person name="Mohabbat K."/>
            <person name="Montgomery B."/>
            <person name="Moore N."/>
            <person name="Morris S."/>
            <person name="Munidasa M."/>
            <person name="Ngo R.N."/>
            <person name="Nguyen N.B."/>
            <person name="Nickerson E."/>
            <person name="Nwaokelemeh O.O."/>
            <person name="Nwokenkwo S."/>
            <person name="Obregon M."/>
            <person name="Oguh M."/>
            <person name="Oragunye N."/>
            <person name="Oviedo R.J."/>
            <person name="Parish B.J."/>
            <person name="Parker D.N."/>
            <person name="Parrish J."/>
            <person name="Parks K.L."/>
            <person name="Paul H.A."/>
            <person name="Payton B.A."/>
            <person name="Perez A."/>
            <person name="Perrin W."/>
            <person name="Pickens A."/>
            <person name="Primus E.L."/>
            <person name="Pu L.-L."/>
            <person name="Puazo M."/>
            <person name="Quiles M.M."/>
            <person name="Quiroz J.B."/>
            <person name="Rabata D."/>
            <person name="Reeves K."/>
            <person name="Ruiz S.J."/>
            <person name="Shao H."/>
            <person name="Sisson I."/>
            <person name="Sonaike T."/>
            <person name="Sorelle R.P."/>
            <person name="Sutton A.E."/>
            <person name="Svatek A.F."/>
            <person name="Svetz L.A."/>
            <person name="Tamerisa K.S."/>
            <person name="Taylor T.R."/>
            <person name="Teague B."/>
            <person name="Thomas N."/>
            <person name="Thorn R.D."/>
            <person name="Trejos Z.Y."/>
            <person name="Trevino B.K."/>
            <person name="Ukegbu O.N."/>
            <person name="Urban J.B."/>
            <person name="Vasquez L.I."/>
            <person name="Vera V.A."/>
            <person name="Villasana D.M."/>
            <person name="Wang L."/>
            <person name="Ward-Moore S."/>
            <person name="Warren J.T."/>
            <person name="Wei X."/>
            <person name="White F."/>
            <person name="Williamson A.L."/>
            <person name="Wleczyk R."/>
            <person name="Wooden H.S."/>
            <person name="Wooden S.H."/>
            <person name="Yen J."/>
            <person name="Yoon L."/>
            <person name="Yoon V."/>
            <person name="Zorrilla S.E."/>
            <person name="Nelson D."/>
            <person name="Kucherlapati R."/>
            <person name="Weinstock G."/>
            <person name="Gibbs R.A."/>
        </authorList>
    </citation>
    <scope>NUCLEOTIDE SEQUENCE [LARGE SCALE GENOMIC DNA]</scope>
</reference>
<reference key="4">
    <citation type="journal article" date="2004" name="Genome Res.">
        <title>The status, quality, and expansion of the NIH full-length cDNA project: the Mammalian Gene Collection (MGC).</title>
        <authorList>
            <consortium name="The MGC Project Team"/>
        </authorList>
    </citation>
    <scope>NUCLEOTIDE SEQUENCE [LARGE SCALE MRNA]</scope>
    <source>
        <tissue>Liver</tissue>
    </source>
</reference>
<reference key="5">
    <citation type="journal article" date="1978" name="Biochemistry">
        <title>Isolation and partial characterization of a new acidic apolipoprotein (apolipoprotein F) from high density lipoproteins of human plasma.</title>
        <authorList>
            <person name="Olofsson S.-O."/>
            <person name="McConathy W.J."/>
            <person name="Alaupovic P."/>
        </authorList>
    </citation>
    <scope>CHARACTERIZATION</scope>
</reference>
<reference key="6">
    <citation type="journal article" date="2012" name="Mol. Cell. Proteomics">
        <title>Human urinary glycoproteomics; attachment site specific analysis of N- and O-linked glycosylations by CID and ECD.</title>
        <authorList>
            <person name="Halim A."/>
            <person name="Nilsson J."/>
            <person name="Ruetschi U."/>
            <person name="Hesse C."/>
            <person name="Larson G."/>
        </authorList>
    </citation>
    <scope>GLYCOSYLATION AT THR-274</scope>
    <scope>STRUCTURE OF CARBOHYDRATES</scope>
    <scope>IDENTIFICATION BY MASS SPECTROMETRY</scope>
</reference>
<reference key="7">
    <citation type="journal article" date="2014" name="J. Proteomics">
        <title>An enzyme assisted RP-RPLC approach for in-depth analysis of human liver phosphoproteome.</title>
        <authorList>
            <person name="Bian Y."/>
            <person name="Song C."/>
            <person name="Cheng K."/>
            <person name="Dong M."/>
            <person name="Wang F."/>
            <person name="Huang J."/>
            <person name="Sun D."/>
            <person name="Wang L."/>
            <person name="Ye M."/>
            <person name="Zou H."/>
        </authorList>
    </citation>
    <scope>PHOSPHORYLATION [LARGE SCALE ANALYSIS] AT SER-323</scope>
    <scope>IDENTIFICATION BY MASS SPECTROMETRY [LARGE SCALE ANALYSIS]</scope>
    <source>
        <tissue>Liver</tissue>
    </source>
</reference>
<reference key="8">
    <citation type="journal article" date="2017" name="Sci. Rep.">
        <title>Absolute quantitation of disease protein biomarkers in a single LC-MS acquisition using apolipoprotein F as an example.</title>
        <authorList>
            <person name="Kumar A."/>
            <person name="Gangadharan B."/>
            <person name="Cobbold J."/>
            <person name="Thursz M."/>
            <person name="Zitzmann N."/>
        </authorList>
    </citation>
    <scope>SUBCELLULAR LOCATION</scope>
    <scope>PHOSPHORYLATION AT SER-323</scope>
    <scope>IDENTIFICATION BY MASS SPECTROMETRY</scope>
</reference>
<organism>
    <name type="scientific">Homo sapiens</name>
    <name type="common">Human</name>
    <dbReference type="NCBI Taxonomy" id="9606"/>
    <lineage>
        <taxon>Eukaryota</taxon>
        <taxon>Metazoa</taxon>
        <taxon>Chordata</taxon>
        <taxon>Craniata</taxon>
        <taxon>Vertebrata</taxon>
        <taxon>Euteleostomi</taxon>
        <taxon>Mammalia</taxon>
        <taxon>Eutheria</taxon>
        <taxon>Euarchontoglires</taxon>
        <taxon>Primates</taxon>
        <taxon>Haplorrhini</taxon>
        <taxon>Catarrhini</taxon>
        <taxon>Hominidae</taxon>
        <taxon>Homo</taxon>
    </lineage>
</organism>
<name>APOF_HUMAN</name>
<gene>
    <name type="primary">APOF</name>
</gene>
<feature type="signal peptide" evidence="1">
    <location>
        <begin position="1"/>
        <end position="35"/>
    </location>
</feature>
<feature type="propeptide" id="PRO_0000002051" evidence="5 6">
    <location>
        <begin position="36"/>
        <end position="164"/>
    </location>
</feature>
<feature type="chain" id="PRO_0000002052" description="Apolipoprotein F">
    <location>
        <begin position="165"/>
        <end position="326"/>
    </location>
</feature>
<feature type="modified residue" description="Phosphoserine" evidence="4 8">
    <location>
        <position position="323"/>
    </location>
</feature>
<feature type="glycosylation site" description="N-linked (GlcNAc...) asparagine" evidence="1">
    <location>
        <position position="118"/>
    </location>
</feature>
<feature type="glycosylation site" description="O-linked (GalNAc...) threonine" evidence="3">
    <location>
        <position position="274"/>
    </location>
</feature>
<feature type="sequence variant" id="VAR_055520" description="In dbSNP:rs11575216.">
    <original>A</original>
    <variation>G</variation>
    <location>
        <position position="178"/>
    </location>
</feature>
<keyword id="KW-0153">Cholesterol metabolism</keyword>
<keyword id="KW-0903">Direct protein sequencing</keyword>
<keyword id="KW-0325">Glycoprotein</keyword>
<keyword id="KW-0345">HDL</keyword>
<keyword id="KW-0427">LDL</keyword>
<keyword id="KW-0443">Lipid metabolism</keyword>
<keyword id="KW-0445">Lipid transport</keyword>
<keyword id="KW-0597">Phosphoprotein</keyword>
<keyword id="KW-1267">Proteomics identification</keyword>
<keyword id="KW-1185">Reference proteome</keyword>
<keyword id="KW-0964">Secreted</keyword>
<keyword id="KW-0732">Signal</keyword>
<keyword id="KW-0753">Steroid metabolism</keyword>
<keyword id="KW-1207">Sterol metabolism</keyword>
<keyword id="KW-0813">Transport</keyword>
<evidence type="ECO:0000255" key="1"/>
<evidence type="ECO:0000269" key="2">
    <source>
    </source>
</evidence>
<evidence type="ECO:0000269" key="3">
    <source>
    </source>
</evidence>
<evidence type="ECO:0000269" key="4">
    <source>
    </source>
</evidence>
<evidence type="ECO:0000269" key="5">
    <source>
    </source>
</evidence>
<evidence type="ECO:0000269" key="6">
    <source>
    </source>
</evidence>
<evidence type="ECO:0000305" key="7"/>
<evidence type="ECO:0007744" key="8">
    <source>
    </source>
</evidence>
<comment type="function">
    <text evidence="6">Minor apolipoprotein that associates with LDL. Inhibits cholesteryl ester transfer protein (CETP) activity and appears to be an important regulator of cholesterol transport. Also associates to a lesser degree with VLDL, Apo-AI and Apo-AII.</text>
</comment>
<comment type="interaction">
    <interactant intactId="EBI-21895464">
        <id>Q13790</id>
    </interactant>
    <interactant intactId="EBI-21555925">
        <id>Q8N4A0</id>
        <label>GALNT4</label>
    </interactant>
    <organismsDiffer>false</organismsDiffer>
    <experiments>2</experiments>
</comment>
<comment type="subcellular location">
    <subcellularLocation>
        <location evidence="2 4 5">Secreted</location>
    </subcellularLocation>
</comment>
<comment type="tissue specificity">
    <text evidence="5">Expressed by the liver and secreted in plasma.</text>
</comment>
<comment type="PTM">
    <text evidence="3">O-glycosylated with core 1 or possibly core 8 glycans.</text>
</comment>
<comment type="similarity">
    <text evidence="7">Belongs to the apolipoprotein F family.</text>
</comment>
<comment type="caution">
    <text evidence="7">It is uncertain whether Met-1 or Met-12 is the initiator.</text>
</comment>
<accession>Q13790</accession>
<accession>Q8TC13</accession>
<protein>
    <recommendedName>
        <fullName>Apolipoprotein F</fullName>
        <shortName>Apo-F</shortName>
    </recommendedName>
    <alternativeName>
        <fullName>Lipid transfer inhibitor protein</fullName>
        <shortName>LTIP</shortName>
    </alternativeName>
</protein>
<sequence>MTGLCGYSAPDMRGLRLIMIPVELLLCYLLLHPVDATSYGKQTNVLMHFPLSLESQTPSSDPLSCQFLHPKSLPGFSHMAPLPKFLVSLALRNALEEAGCQADVWALQLQLYRQGGVNATQVLIQHLRGLQKGRSTERNVSVEALASALQLLAREQQSTGRVGRSLPTEDCENEKEQAVHNVVQLLPGVGTFYNLGTALYYATQNCLGKARERGRDGAIDLGYDLLMTMAGMSGGPMGLAISAALKPALRSGVQQLIQYYQDQKDANISQPETTKEGLRAISDVSDLEETTTLASFISEVVSSAPYWGWAIIKSYDLDPGAGSLEI</sequence>